<name>PAN_SACI3</name>
<dbReference type="EMBL" id="CP001401">
    <property type="protein sequence ID" value="ACP55818.1"/>
    <property type="molecule type" value="Genomic_DNA"/>
</dbReference>
<dbReference type="RefSeq" id="WP_012711834.1">
    <property type="nucleotide sequence ID" value="NC_012632.1"/>
</dbReference>
<dbReference type="SMR" id="C3MZI6"/>
<dbReference type="KEGG" id="sim:M1627_1947"/>
<dbReference type="HOGENOM" id="CLU_000688_2_0_2"/>
<dbReference type="Proteomes" id="UP000002307">
    <property type="component" value="Chromosome"/>
</dbReference>
<dbReference type="GO" id="GO:0005737">
    <property type="term" value="C:cytoplasm"/>
    <property type="evidence" value="ECO:0007669"/>
    <property type="project" value="UniProtKB-SubCell"/>
</dbReference>
<dbReference type="GO" id="GO:0022623">
    <property type="term" value="C:proteasome-activating nucleotidase complex"/>
    <property type="evidence" value="ECO:0007669"/>
    <property type="project" value="UniProtKB-UniRule"/>
</dbReference>
<dbReference type="GO" id="GO:0005524">
    <property type="term" value="F:ATP binding"/>
    <property type="evidence" value="ECO:0007669"/>
    <property type="project" value="UniProtKB-UniRule"/>
</dbReference>
<dbReference type="GO" id="GO:0016887">
    <property type="term" value="F:ATP hydrolysis activity"/>
    <property type="evidence" value="ECO:0007669"/>
    <property type="project" value="UniProtKB-UniRule"/>
</dbReference>
<dbReference type="GO" id="GO:0010498">
    <property type="term" value="P:proteasomal protein catabolic process"/>
    <property type="evidence" value="ECO:0007669"/>
    <property type="project" value="UniProtKB-UniRule"/>
</dbReference>
<dbReference type="GO" id="GO:0043335">
    <property type="term" value="P:protein unfolding"/>
    <property type="evidence" value="ECO:0007669"/>
    <property type="project" value="UniProtKB-UniRule"/>
</dbReference>
<dbReference type="CDD" id="cd19502">
    <property type="entry name" value="RecA-like_PAN_like"/>
    <property type="match status" value="1"/>
</dbReference>
<dbReference type="FunFam" id="3.40.50.300:FF:000033">
    <property type="entry name" value="26S protease regulatory subunit 6B"/>
    <property type="match status" value="1"/>
</dbReference>
<dbReference type="FunFam" id="1.10.8.60:FF:000001">
    <property type="entry name" value="ATP-dependent zinc metalloprotease FtsH"/>
    <property type="match status" value="1"/>
</dbReference>
<dbReference type="Gene3D" id="1.10.8.60">
    <property type="match status" value="1"/>
</dbReference>
<dbReference type="Gene3D" id="2.40.50.140">
    <property type="entry name" value="Nucleic acid-binding proteins"/>
    <property type="match status" value="1"/>
</dbReference>
<dbReference type="Gene3D" id="3.40.50.300">
    <property type="entry name" value="P-loop containing nucleotide triphosphate hydrolases"/>
    <property type="match status" value="1"/>
</dbReference>
<dbReference type="HAMAP" id="MF_00553">
    <property type="entry name" value="PAN"/>
    <property type="match status" value="1"/>
</dbReference>
<dbReference type="InterPro" id="IPR050221">
    <property type="entry name" value="26S_Proteasome_ATPase"/>
</dbReference>
<dbReference type="InterPro" id="IPR003593">
    <property type="entry name" value="AAA+_ATPase"/>
</dbReference>
<dbReference type="InterPro" id="IPR041569">
    <property type="entry name" value="AAA_lid_3"/>
</dbReference>
<dbReference type="InterPro" id="IPR003959">
    <property type="entry name" value="ATPase_AAA_core"/>
</dbReference>
<dbReference type="InterPro" id="IPR003960">
    <property type="entry name" value="ATPase_AAA_CS"/>
</dbReference>
<dbReference type="InterPro" id="IPR012340">
    <property type="entry name" value="NA-bd_OB-fold"/>
</dbReference>
<dbReference type="InterPro" id="IPR023501">
    <property type="entry name" value="Nucleotidase_PAN"/>
</dbReference>
<dbReference type="InterPro" id="IPR027417">
    <property type="entry name" value="P-loop_NTPase"/>
</dbReference>
<dbReference type="InterPro" id="IPR032501">
    <property type="entry name" value="Prot_ATP_ID_OB_2nd"/>
</dbReference>
<dbReference type="NCBIfam" id="NF003069">
    <property type="entry name" value="PRK03992.1"/>
    <property type="match status" value="1"/>
</dbReference>
<dbReference type="NCBIfam" id="TIGR01242">
    <property type="entry name" value="proteasome-activating nucleotidase"/>
    <property type="match status" value="1"/>
</dbReference>
<dbReference type="PANTHER" id="PTHR23073">
    <property type="entry name" value="26S PROTEASOME REGULATORY SUBUNIT"/>
    <property type="match status" value="1"/>
</dbReference>
<dbReference type="Pfam" id="PF00004">
    <property type="entry name" value="AAA"/>
    <property type="match status" value="1"/>
</dbReference>
<dbReference type="Pfam" id="PF17862">
    <property type="entry name" value="AAA_lid_3"/>
    <property type="match status" value="1"/>
</dbReference>
<dbReference type="Pfam" id="PF16450">
    <property type="entry name" value="Prot_ATP_ID_OB_C"/>
    <property type="match status" value="1"/>
</dbReference>
<dbReference type="SMART" id="SM00382">
    <property type="entry name" value="AAA"/>
    <property type="match status" value="1"/>
</dbReference>
<dbReference type="SUPFAM" id="SSF52540">
    <property type="entry name" value="P-loop containing nucleoside triphosphate hydrolases"/>
    <property type="match status" value="1"/>
</dbReference>
<dbReference type="PROSITE" id="PS00674">
    <property type="entry name" value="AAA"/>
    <property type="match status" value="1"/>
</dbReference>
<proteinExistence type="inferred from homology"/>
<comment type="function">
    <text evidence="1">ATPase which is responsible for recognizing, binding, unfolding and translocation of substrate proteins into the archaeal 20S proteasome core particle. Is essential for opening the gate of the 20S proteasome via an interaction with its C-terminus, thereby allowing substrate entry and access to the site of proteolysis. Thus, the C-termini of the proteasomal ATPase function like a 'key in a lock' to induce gate opening and therefore regulate proteolysis. Unfolding activity requires energy from ATP hydrolysis, whereas ATP binding alone promotes ATPase-20S proteasome association which triggers gate opening, and supports translocation of unfolded substrates.</text>
</comment>
<comment type="subunit">
    <text evidence="1">Homohexamer. The hexameric complex has a two-ring architecture resembling a top hat that caps the 20S proteasome core at one or both ends. Upon ATP-binding, the C-terminus of PAN interacts with the alpha-rings of the proteasome core by binding to the intersubunit pockets.</text>
</comment>
<comment type="subcellular location">
    <subcellularLocation>
        <location evidence="1">Cytoplasm</location>
    </subcellularLocation>
</comment>
<comment type="domain">
    <text evidence="1">Consists of three main regions, an N-terminal coiled-coil domain that may assist in substrate recognition, an interdomain involved in PAN hexamerization, and a C-terminal ATPase domain of the AAA type.</text>
</comment>
<comment type="similarity">
    <text evidence="1">Belongs to the AAA ATPase family.</text>
</comment>
<feature type="chain" id="PRO_1000212004" description="Proteasome-activating nucleotidase">
    <location>
        <begin position="1"/>
        <end position="393"/>
    </location>
</feature>
<feature type="region of interest" description="Docks into pockets in the proteasome alpha-ring to cause gate opening" evidence="1">
    <location>
        <begin position="391"/>
        <end position="393"/>
    </location>
</feature>
<feature type="coiled-coil region" evidence="1">
    <location>
        <begin position="14"/>
        <end position="53"/>
    </location>
</feature>
<feature type="binding site" evidence="1">
    <location>
        <begin position="178"/>
        <end position="183"/>
    </location>
    <ligand>
        <name>ATP</name>
        <dbReference type="ChEBI" id="CHEBI:30616"/>
    </ligand>
</feature>
<feature type="binding site" evidence="1">
    <location>
        <position position="317"/>
    </location>
    <ligand>
        <name>ATP</name>
        <dbReference type="ChEBI" id="CHEBI:30616"/>
    </ligand>
</feature>
<keyword id="KW-0067">ATP-binding</keyword>
<keyword id="KW-0143">Chaperone</keyword>
<keyword id="KW-0175">Coiled coil</keyword>
<keyword id="KW-0963">Cytoplasm</keyword>
<keyword id="KW-0547">Nucleotide-binding</keyword>
<keyword id="KW-0647">Proteasome</keyword>
<evidence type="ECO:0000255" key="1">
    <source>
        <dbReference type="HAMAP-Rule" id="MF_00553"/>
    </source>
</evidence>
<gene>
    <name evidence="1" type="primary">pan</name>
    <name type="ordered locus">M1627_1947</name>
</gene>
<accession>C3MZI6</accession>
<sequence length="393" mass="44020">MSGDFDTIRDASSSDEVQLVRLLEEKIKSLQIEIENLRKELNYYKAEMEKMLSPPLIEAVVLDVLPDGRVLVRSSSGPNLVVNVASHIDQKLIKPGVSVALNQRGSTILEVLPQKEDPIVKTMEIVEKPNVTYSEIGGLEEQIKELREVVELPLKKPEIFREIGVEPPKGVLLYGPPGTGKTMLAKAVATESNAVFIHVVASEFAQKFVGEGARIVRELFEMAKRKAPSIIFIDEIDAIGAKRIDIGTSGEREIQRTLMQLLAELDGFNPLDNVKIIAATNRIDILDPALLRPGRFDRIIEVPLPDFRGRTEIFNIYLKKMKVEDNINLELLSQLSEGFSGADIKNVCVEAAYMAIRDGRNKVTMKDLVDAITKINVKRNNMESMKERREKYS</sequence>
<protein>
    <recommendedName>
        <fullName evidence="1">Proteasome-activating nucleotidase</fullName>
        <shortName evidence="1">PAN</shortName>
    </recommendedName>
    <alternativeName>
        <fullName evidence="1">Proteasomal ATPase</fullName>
    </alternativeName>
    <alternativeName>
        <fullName evidence="1">Proteasome regulatory ATPase</fullName>
    </alternativeName>
    <alternativeName>
        <fullName evidence="1">Proteasome regulatory particle</fullName>
    </alternativeName>
</protein>
<reference key="1">
    <citation type="journal article" date="2009" name="Proc. Natl. Acad. Sci. U.S.A.">
        <title>Biogeography of the Sulfolobus islandicus pan-genome.</title>
        <authorList>
            <person name="Reno M.L."/>
            <person name="Held N.L."/>
            <person name="Fields C.J."/>
            <person name="Burke P.V."/>
            <person name="Whitaker R.J."/>
        </authorList>
    </citation>
    <scope>NUCLEOTIDE SEQUENCE [LARGE SCALE GENOMIC DNA]</scope>
    <source>
        <strain>M.16.27</strain>
    </source>
</reference>
<organism>
    <name type="scientific">Saccharolobus islandicus (strain M.16.27)</name>
    <name type="common">Sulfolobus islandicus</name>
    <dbReference type="NCBI Taxonomy" id="427318"/>
    <lineage>
        <taxon>Archaea</taxon>
        <taxon>Thermoproteota</taxon>
        <taxon>Thermoprotei</taxon>
        <taxon>Sulfolobales</taxon>
        <taxon>Sulfolobaceae</taxon>
        <taxon>Saccharolobus</taxon>
    </lineage>
</organism>